<gene>
    <name evidence="1" type="primary">rplJ</name>
    <name type="ordered locus">Anae109_2223</name>
</gene>
<reference key="1">
    <citation type="journal article" date="2015" name="Genome Announc.">
        <title>Complete genome sequence of Anaeromyxobacter sp. Fw109-5, an anaerobic, metal-reducing bacterium isolated from a contaminated subsurface environment.</title>
        <authorList>
            <person name="Hwang C."/>
            <person name="Copeland A."/>
            <person name="Lucas S."/>
            <person name="Lapidus A."/>
            <person name="Barry K."/>
            <person name="Glavina Del Rio T."/>
            <person name="Dalin E."/>
            <person name="Tice H."/>
            <person name="Pitluck S."/>
            <person name="Sims D."/>
            <person name="Brettin T."/>
            <person name="Bruce D.C."/>
            <person name="Detter J.C."/>
            <person name="Han C.S."/>
            <person name="Schmutz J."/>
            <person name="Larimer F.W."/>
            <person name="Land M.L."/>
            <person name="Hauser L.J."/>
            <person name="Kyrpides N."/>
            <person name="Lykidis A."/>
            <person name="Richardson P."/>
            <person name="Belieav A."/>
            <person name="Sanford R.A."/>
            <person name="Loeffler F.E."/>
            <person name="Fields M.W."/>
        </authorList>
    </citation>
    <scope>NUCLEOTIDE SEQUENCE [LARGE SCALE GENOMIC DNA]</scope>
    <source>
        <strain>Fw109-5</strain>
    </source>
</reference>
<keyword id="KW-1185">Reference proteome</keyword>
<keyword id="KW-0687">Ribonucleoprotein</keyword>
<keyword id="KW-0689">Ribosomal protein</keyword>
<keyword id="KW-0694">RNA-binding</keyword>
<keyword id="KW-0699">rRNA-binding</keyword>
<protein>
    <recommendedName>
        <fullName evidence="1">Large ribosomal subunit protein uL10</fullName>
    </recommendedName>
    <alternativeName>
        <fullName evidence="2">50S ribosomal protein L10</fullName>
    </alternativeName>
</protein>
<accession>A7HCH9</accession>
<evidence type="ECO:0000255" key="1">
    <source>
        <dbReference type="HAMAP-Rule" id="MF_00362"/>
    </source>
</evidence>
<evidence type="ECO:0000305" key="2"/>
<proteinExistence type="inferred from homology"/>
<sequence>MNRTEKEQVIGELHEKMAMAKAAILAEPKGLNVATVTELRRKLREAKVEYRIVKNTLAARAAKGTPVESIAEKFVGPTALVMSYDDVVTPAKLLADFMKDRENFTIRTAVIEGRVVDAKGIQSLAKMPGLQELRGQIAAMIAQPATQLARVLGAPGQQLARVLGARREQLEKQS</sequence>
<feature type="chain" id="PRO_1000005464" description="Large ribosomal subunit protein uL10">
    <location>
        <begin position="1"/>
        <end position="174"/>
    </location>
</feature>
<organism>
    <name type="scientific">Anaeromyxobacter sp. (strain Fw109-5)</name>
    <dbReference type="NCBI Taxonomy" id="404589"/>
    <lineage>
        <taxon>Bacteria</taxon>
        <taxon>Pseudomonadati</taxon>
        <taxon>Myxococcota</taxon>
        <taxon>Myxococcia</taxon>
        <taxon>Myxococcales</taxon>
        <taxon>Cystobacterineae</taxon>
        <taxon>Anaeromyxobacteraceae</taxon>
        <taxon>Anaeromyxobacter</taxon>
    </lineage>
</organism>
<comment type="function">
    <text evidence="1">Forms part of the ribosomal stalk, playing a central role in the interaction of the ribosome with GTP-bound translation factors.</text>
</comment>
<comment type="subunit">
    <text evidence="1">Part of the ribosomal stalk of the 50S ribosomal subunit. The N-terminus interacts with L11 and the large rRNA to form the base of the stalk. The C-terminus forms an elongated spine to which L12 dimers bind in a sequential fashion forming a multimeric L10(L12)X complex.</text>
</comment>
<comment type="similarity">
    <text evidence="1">Belongs to the universal ribosomal protein uL10 family.</text>
</comment>
<name>RL10_ANADF</name>
<dbReference type="EMBL" id="CP000769">
    <property type="protein sequence ID" value="ABS26425.1"/>
    <property type="molecule type" value="Genomic_DNA"/>
</dbReference>
<dbReference type="RefSeq" id="WP_012097007.1">
    <property type="nucleotide sequence ID" value="NC_009675.1"/>
</dbReference>
<dbReference type="SMR" id="A7HCH9"/>
<dbReference type="STRING" id="404589.Anae109_2223"/>
<dbReference type="KEGG" id="afw:Anae109_2223"/>
<dbReference type="eggNOG" id="COG0244">
    <property type="taxonomic scope" value="Bacteria"/>
</dbReference>
<dbReference type="HOGENOM" id="CLU_092227_1_2_7"/>
<dbReference type="OrthoDB" id="3186107at2"/>
<dbReference type="Proteomes" id="UP000006382">
    <property type="component" value="Chromosome"/>
</dbReference>
<dbReference type="GO" id="GO:1990904">
    <property type="term" value="C:ribonucleoprotein complex"/>
    <property type="evidence" value="ECO:0007669"/>
    <property type="project" value="UniProtKB-KW"/>
</dbReference>
<dbReference type="GO" id="GO:0005840">
    <property type="term" value="C:ribosome"/>
    <property type="evidence" value="ECO:0007669"/>
    <property type="project" value="UniProtKB-KW"/>
</dbReference>
<dbReference type="GO" id="GO:0070180">
    <property type="term" value="F:large ribosomal subunit rRNA binding"/>
    <property type="evidence" value="ECO:0007669"/>
    <property type="project" value="UniProtKB-UniRule"/>
</dbReference>
<dbReference type="GO" id="GO:0006412">
    <property type="term" value="P:translation"/>
    <property type="evidence" value="ECO:0007669"/>
    <property type="project" value="UniProtKB-UniRule"/>
</dbReference>
<dbReference type="CDD" id="cd05797">
    <property type="entry name" value="Ribosomal_L10"/>
    <property type="match status" value="1"/>
</dbReference>
<dbReference type="Gene3D" id="3.30.70.1730">
    <property type="match status" value="1"/>
</dbReference>
<dbReference type="Gene3D" id="6.10.250.290">
    <property type="match status" value="1"/>
</dbReference>
<dbReference type="HAMAP" id="MF_00362">
    <property type="entry name" value="Ribosomal_uL10"/>
    <property type="match status" value="1"/>
</dbReference>
<dbReference type="InterPro" id="IPR001790">
    <property type="entry name" value="Ribosomal_uL10"/>
</dbReference>
<dbReference type="InterPro" id="IPR043141">
    <property type="entry name" value="Ribosomal_uL10-like_sf"/>
</dbReference>
<dbReference type="InterPro" id="IPR022973">
    <property type="entry name" value="Ribosomal_uL10_bac"/>
</dbReference>
<dbReference type="InterPro" id="IPR047865">
    <property type="entry name" value="Ribosomal_uL10_bac_type"/>
</dbReference>
<dbReference type="NCBIfam" id="NF000955">
    <property type="entry name" value="PRK00099.1-1"/>
    <property type="match status" value="1"/>
</dbReference>
<dbReference type="PANTHER" id="PTHR11560">
    <property type="entry name" value="39S RIBOSOMAL PROTEIN L10, MITOCHONDRIAL"/>
    <property type="match status" value="1"/>
</dbReference>
<dbReference type="Pfam" id="PF00466">
    <property type="entry name" value="Ribosomal_L10"/>
    <property type="match status" value="1"/>
</dbReference>
<dbReference type="SUPFAM" id="SSF160369">
    <property type="entry name" value="Ribosomal protein L10-like"/>
    <property type="match status" value="1"/>
</dbReference>